<name>ATD3A_MOUSE</name>
<comment type="function">
    <text evidence="2">Essential for mitochondrial network organization, mitochondrial metabolism and cell growth at organism and cellular level. May play an important role in mitochondrial protein synthesis. May also participate in mitochondrial DNA replication. May bind to mitochondrial DNA D-loops and contribute to nucleoid stability. Required for enhanced channeling of cholesterol for hormone-dependent steroidogenesis. Involved in mitochondrial-mediated antiviral innate immunity. Required to protect mitochondria from the PERK-mediated unfolded protein response: specifically inhibits the activity of EIF2AK3/PERK at mitochondria-endoplasmic reticulum contact sites, thereby providing a safe haven for mitochondrial protein translation during endoplasmic reticulum stress. Ability to inhibit EIF2AK3/PERK is independent of its ATPase activity. Also involved in the mitochondrial DNA damage response by promoting signaling between damaged genomes and the mitochondrial membrane, leading to activation of the integrated stress response (ISR).</text>
</comment>
<comment type="catalytic activity">
    <reaction evidence="2">
        <text>ATP + H2O = ADP + phosphate + H(+)</text>
        <dbReference type="Rhea" id="RHEA:13065"/>
        <dbReference type="ChEBI" id="CHEBI:15377"/>
        <dbReference type="ChEBI" id="CHEBI:15378"/>
        <dbReference type="ChEBI" id="CHEBI:30616"/>
        <dbReference type="ChEBI" id="CHEBI:43474"/>
        <dbReference type="ChEBI" id="CHEBI:456216"/>
    </reaction>
    <physiologicalReaction direction="left-to-right" evidence="2">
        <dbReference type="Rhea" id="RHEA:13066"/>
    </physiologicalReaction>
</comment>
<comment type="subunit">
    <text evidence="2">Can form homooligomers. Homodimer formation at the N-terminus may be regulated by ATP and is required for the interaction with the inner surface of the mitochondrial outer membrane and correct mitochondrial homeostasis. Interacts with components of the mitochondrial ribosome and with other proteins involved in mitochondrial RNA metabolism. May also interact with protein involved in lipid metabolism, including STARD9. May interact with FAM210A. Interacts with GADD45GIP1. Interacts with S100B in a Ca(+2)- and Zn(+2)-dependent manner; this interaction probably occurs in the cytosol prior to mitochondrial targeting. S100B could assist ATAD3A cytoplasmic processing, preventing aggregation and favoring mitochondrial localization. Interacts with HSP60/HSPD1. Interacts with CLPB. Interacts with EIF2AK3/PERK; ATAD3A and EIF2S1/eIF-2-alpha occupy a common binding site within the cytoplasmic loop of EIF2AK3/PERK, leading to prevent EIF2AK3/PERK association with its substrate EIF2S1/eIF-2-alpha.</text>
</comment>
<comment type="interaction">
    <interactant intactId="EBI-772703">
        <id>Q925I1</id>
    </interactant>
    <interactant intactId="EBI-2365792">
        <id>Q8K1M6</id>
        <label>Dnm1l</label>
    </interactant>
    <organismsDiffer>false</organismsDiffer>
    <experiments>13</experiments>
</comment>
<comment type="subcellular location">
    <subcellularLocation>
        <location evidence="2">Mitochondrion inner membrane</location>
        <topology evidence="2">Single-pass membrane protein</topology>
    </subcellularLocation>
    <subcellularLocation>
        <location evidence="2">Mitochondrion matrix</location>
        <location evidence="2">Mitochondrion nucleoid</location>
    </subcellularLocation>
    <text evidence="2">In the mitochondrial inner membrane, enriched in sites with the potential to form contacts with the outer membrane. The N-terminal domain interacts with the inner surface of the mitochondrial outer membrane and the C-terminal domain localizes in a specific matrix compartment, where it is associated with nucleoids. Also present at mitochondria-endoplasmic reticulum contact sites; where it interacts with EIF2AK3/PERK.</text>
</comment>
<comment type="alternative products">
    <event type="alternative splicing"/>
    <isoform>
        <id>Q925I1-1</id>
        <name>1</name>
        <sequence type="displayed"/>
    </isoform>
    <isoform>
        <id>Q925I1-2</id>
        <name>2</name>
        <sequence type="described" ref="VSP_015643"/>
    </isoform>
</comment>
<comment type="tissue specificity">
    <text evidence="5">Expressed in heart, spleen, kidney, liver and at smaller levels, in lung and muscle (at protein level).</text>
</comment>
<comment type="domain">
    <text evidence="2">The transmembrane domain and a C-terminal adjacent region contain all information necessary for mitochondrial targeting.</text>
</comment>
<comment type="similarity">
    <text evidence="7">Belongs to the AAA ATPase family.</text>
</comment>
<feature type="initiator methionine" description="Removed" evidence="1">
    <location>
        <position position="1"/>
    </location>
</feature>
<feature type="chain" id="PRO_0000084801" description="ATPase family AAA domain-containing protein 3A">
    <location>
        <begin position="2"/>
        <end position="591"/>
    </location>
</feature>
<feature type="topological domain" description="Mitochondrial intermembrane" evidence="3">
    <location>
        <begin position="2"/>
        <end position="245"/>
    </location>
</feature>
<feature type="transmembrane region" description="Helical" evidence="3">
    <location>
        <begin position="246"/>
        <end position="263"/>
    </location>
</feature>
<feature type="topological domain" description="Mitochondrial matrix" evidence="3">
    <location>
        <begin position="264"/>
        <end position="586"/>
    </location>
</feature>
<feature type="region of interest" description="Disordered" evidence="4">
    <location>
        <begin position="1"/>
        <end position="52"/>
    </location>
</feature>
<feature type="region of interest" description="Required for interaction with the inner surface of the mitochondrial outer membrane" evidence="2">
    <location>
        <begin position="2"/>
        <end position="49"/>
    </location>
</feature>
<feature type="region of interest" description="S100B-binding" evidence="2">
    <location>
        <begin position="289"/>
        <end position="304"/>
    </location>
</feature>
<feature type="region of interest" description="Disordered" evidence="4">
    <location>
        <begin position="572"/>
        <end position="591"/>
    </location>
</feature>
<feature type="coiled-coil region" evidence="3">
    <location>
        <begin position="55"/>
        <end position="216"/>
    </location>
</feature>
<feature type="compositionally biased region" description="Basic and acidic residues" evidence="4">
    <location>
        <begin position="31"/>
        <end position="47"/>
    </location>
</feature>
<feature type="binding site" evidence="3">
    <location>
        <begin position="351"/>
        <end position="358"/>
    </location>
    <ligand>
        <name>ATP</name>
        <dbReference type="ChEBI" id="CHEBI:30616"/>
    </ligand>
</feature>
<feature type="modified residue" description="N-acetylserine" evidence="1">
    <location>
        <position position="2"/>
    </location>
</feature>
<feature type="modified residue" description="N6-acetyllysine; alternate" evidence="8">
    <location>
        <position position="490"/>
    </location>
</feature>
<feature type="modified residue" description="N6-succinyllysine; alternate" evidence="9">
    <location>
        <position position="490"/>
    </location>
</feature>
<feature type="modified residue" description="N6-acetyllysine" evidence="8">
    <location>
        <position position="494"/>
    </location>
</feature>
<feature type="modified residue" description="N6-acetyllysine" evidence="8">
    <location>
        <position position="512"/>
    </location>
</feature>
<feature type="splice variant" id="VSP_015643" description="In isoform 2." evidence="6">
    <original>EKISEDLRATLNAFLHRTGQHSSKFMLVLASNQPEQFDWAINDRIDEMVCFALPQREERERLVRMYFDKYVLKPATEGKQ</original>
    <variation>R</variation>
    <location>
        <begin position="422"/>
        <end position="501"/>
    </location>
</feature>
<feature type="sequence conflict" description="In Ref. 2; BAC36055." evidence="7" ref="2">
    <original>T</original>
    <variation>K</variation>
    <location>
        <position position="376"/>
    </location>
</feature>
<feature type="sequence conflict" description="In Ref. 3; BAE42791." evidence="7" ref="3">
    <original>M</original>
    <variation>I</variation>
    <location>
        <position position="447"/>
    </location>
</feature>
<evidence type="ECO:0000250" key="1">
    <source>
        <dbReference type="UniProtKB" id="Q5T9A4"/>
    </source>
</evidence>
<evidence type="ECO:0000250" key="2">
    <source>
        <dbReference type="UniProtKB" id="Q9NVI7"/>
    </source>
</evidence>
<evidence type="ECO:0000255" key="3"/>
<evidence type="ECO:0000256" key="4">
    <source>
        <dbReference type="SAM" id="MobiDB-lite"/>
    </source>
</evidence>
<evidence type="ECO:0000269" key="5">
    <source>
    </source>
</evidence>
<evidence type="ECO:0000303" key="6">
    <source>
    </source>
</evidence>
<evidence type="ECO:0000305" key="7"/>
<evidence type="ECO:0007744" key="8">
    <source>
    </source>
</evidence>
<evidence type="ECO:0007744" key="9">
    <source>
    </source>
</evidence>
<dbReference type="EC" id="3.6.1.-" evidence="2"/>
<dbReference type="EMBL" id="AF343079">
    <property type="protein sequence ID" value="AAK38648.1"/>
    <property type="molecule type" value="mRNA"/>
</dbReference>
<dbReference type="EMBL" id="AK075921">
    <property type="protein sequence ID" value="BAC36055.1"/>
    <property type="molecule type" value="mRNA"/>
</dbReference>
<dbReference type="EMBL" id="AK148974">
    <property type="protein sequence ID" value="BAE28707.1"/>
    <property type="molecule type" value="mRNA"/>
</dbReference>
<dbReference type="EMBL" id="AK149702">
    <property type="protein sequence ID" value="BAE29037.1"/>
    <property type="molecule type" value="mRNA"/>
</dbReference>
<dbReference type="EMBL" id="AK150037">
    <property type="protein sequence ID" value="BAE29259.1"/>
    <property type="molecule type" value="mRNA"/>
</dbReference>
<dbReference type="EMBL" id="AK166099">
    <property type="protein sequence ID" value="BAE38570.1"/>
    <property type="molecule type" value="mRNA"/>
</dbReference>
<dbReference type="EMBL" id="AK172038">
    <property type="protein sequence ID" value="BAE42791.1"/>
    <property type="molecule type" value="mRNA"/>
</dbReference>
<dbReference type="EMBL" id="AK173141">
    <property type="protein sequence ID" value="BAD32419.1"/>
    <property type="molecule type" value="Unassigned_RNA"/>
</dbReference>
<dbReference type="EMBL" id="AL670236">
    <property type="status" value="NOT_ANNOTATED_CDS"/>
    <property type="molecule type" value="Genomic_DNA"/>
</dbReference>
<dbReference type="EMBL" id="CH466594">
    <property type="protein sequence ID" value="EDL15028.1"/>
    <property type="molecule type" value="Genomic_DNA"/>
</dbReference>
<dbReference type="EMBL" id="BC023301">
    <property type="protein sequence ID" value="AAH23301.1"/>
    <property type="molecule type" value="mRNA"/>
</dbReference>
<dbReference type="EMBL" id="BC058373">
    <property type="protein sequence ID" value="AAH58373.1"/>
    <property type="molecule type" value="mRNA"/>
</dbReference>
<dbReference type="EMBL" id="BC060036">
    <property type="protein sequence ID" value="AAH60036.1"/>
    <property type="molecule type" value="mRNA"/>
</dbReference>
<dbReference type="CCDS" id="CCDS19037.1">
    <molecule id="Q925I1-1"/>
</dbReference>
<dbReference type="RefSeq" id="NP_849534.2">
    <molecule id="Q925I1-1"/>
    <property type="nucleotide sequence ID" value="NM_179203.3"/>
</dbReference>
<dbReference type="SMR" id="Q925I1"/>
<dbReference type="BioGRID" id="224456">
    <property type="interactions" value="24"/>
</dbReference>
<dbReference type="DIP" id="DIP-32373N"/>
<dbReference type="FunCoup" id="Q925I1">
    <property type="interactions" value="2585"/>
</dbReference>
<dbReference type="IntAct" id="Q925I1">
    <property type="interactions" value="8"/>
</dbReference>
<dbReference type="MINT" id="Q925I1"/>
<dbReference type="STRING" id="10090.ENSMUSP00000030903"/>
<dbReference type="GlyGen" id="Q925I1">
    <property type="glycosylation" value="1 site, 1 O-linked glycan (1 site)"/>
</dbReference>
<dbReference type="iPTMnet" id="Q925I1"/>
<dbReference type="PhosphoSitePlus" id="Q925I1"/>
<dbReference type="SwissPalm" id="Q925I1"/>
<dbReference type="jPOST" id="Q925I1"/>
<dbReference type="PaxDb" id="10090-ENSMUSP00000030903"/>
<dbReference type="PeptideAtlas" id="Q925I1"/>
<dbReference type="ProteomicsDB" id="265139">
    <molecule id="Q925I1-1"/>
</dbReference>
<dbReference type="ProteomicsDB" id="265140">
    <molecule id="Q925I1-2"/>
</dbReference>
<dbReference type="Pumba" id="Q925I1"/>
<dbReference type="Antibodypedia" id="26400">
    <property type="antibodies" value="166 antibodies from 25 providers"/>
</dbReference>
<dbReference type="Ensembl" id="ENSMUST00000030903.12">
    <molecule id="Q925I1-1"/>
    <property type="protein sequence ID" value="ENSMUSP00000030903.6"/>
    <property type="gene ID" value="ENSMUSG00000029036.19"/>
</dbReference>
<dbReference type="GeneID" id="108888"/>
<dbReference type="KEGG" id="mmu:108888"/>
<dbReference type="UCSC" id="uc008wen.2">
    <molecule id="Q925I1-1"/>
    <property type="organism name" value="mouse"/>
</dbReference>
<dbReference type="AGR" id="MGI:1919214"/>
<dbReference type="CTD" id="55210"/>
<dbReference type="MGI" id="MGI:1919214">
    <property type="gene designation" value="Atad3a"/>
</dbReference>
<dbReference type="VEuPathDB" id="HostDB:ENSMUSG00000029036"/>
<dbReference type="eggNOG" id="KOG0742">
    <property type="taxonomic scope" value="Eukaryota"/>
</dbReference>
<dbReference type="GeneTree" id="ENSGT00730000111059"/>
<dbReference type="HOGENOM" id="CLU_011488_2_0_1"/>
<dbReference type="InParanoid" id="Q925I1"/>
<dbReference type="OMA" id="HKSITGG"/>
<dbReference type="OrthoDB" id="199596at2759"/>
<dbReference type="PhylomeDB" id="Q925I1"/>
<dbReference type="TreeFam" id="TF313922"/>
<dbReference type="Reactome" id="R-MMU-6798695">
    <property type="pathway name" value="Neutrophil degranulation"/>
</dbReference>
<dbReference type="BioGRID-ORCS" id="108888">
    <property type="hits" value="29 hits in 79 CRISPR screens"/>
</dbReference>
<dbReference type="CD-CODE" id="CE726F99">
    <property type="entry name" value="Postsynaptic density"/>
</dbReference>
<dbReference type="ChiTaRS" id="Atad3a">
    <property type="organism name" value="mouse"/>
</dbReference>
<dbReference type="PRO" id="PR:Q925I1"/>
<dbReference type="Proteomes" id="UP000000589">
    <property type="component" value="Chromosome 4"/>
</dbReference>
<dbReference type="RNAct" id="Q925I1">
    <property type="molecule type" value="protein"/>
</dbReference>
<dbReference type="Bgee" id="ENSMUSG00000029036">
    <property type="expression patterns" value="Expressed in metanephric renal vesicle and 252 other cell types or tissues"/>
</dbReference>
<dbReference type="ExpressionAtlas" id="Q925I1">
    <property type="expression patterns" value="baseline and differential"/>
</dbReference>
<dbReference type="GO" id="GO:0044233">
    <property type="term" value="C:mitochondria-associated endoplasmic reticulum membrane contact site"/>
    <property type="evidence" value="ECO:0007669"/>
    <property type="project" value="Ensembl"/>
</dbReference>
<dbReference type="GO" id="GO:0005743">
    <property type="term" value="C:mitochondrial inner membrane"/>
    <property type="evidence" value="ECO:0007005"/>
    <property type="project" value="MGI"/>
</dbReference>
<dbReference type="GO" id="GO:0042645">
    <property type="term" value="C:mitochondrial nucleoid"/>
    <property type="evidence" value="ECO:0007669"/>
    <property type="project" value="UniProtKB-SubCell"/>
</dbReference>
<dbReference type="GO" id="GO:0005739">
    <property type="term" value="C:mitochondrion"/>
    <property type="evidence" value="ECO:0000314"/>
    <property type="project" value="MGI"/>
</dbReference>
<dbReference type="GO" id="GO:0005524">
    <property type="term" value="F:ATP binding"/>
    <property type="evidence" value="ECO:0007669"/>
    <property type="project" value="UniProtKB-KW"/>
</dbReference>
<dbReference type="GO" id="GO:0016887">
    <property type="term" value="F:ATP hydrolysis activity"/>
    <property type="evidence" value="ECO:0000250"/>
    <property type="project" value="UniProtKB"/>
</dbReference>
<dbReference type="GO" id="GO:0030291">
    <property type="term" value="F:protein serine/threonine kinase inhibitor activity"/>
    <property type="evidence" value="ECO:0000250"/>
    <property type="project" value="UniProtKB"/>
</dbReference>
<dbReference type="GO" id="GO:0140374">
    <property type="term" value="P:antiviral innate immune response"/>
    <property type="evidence" value="ECO:0000250"/>
    <property type="project" value="UniProtKB"/>
</dbReference>
<dbReference type="GO" id="GO:0006974">
    <property type="term" value="P:DNA damage response"/>
    <property type="evidence" value="ECO:0000250"/>
    <property type="project" value="UniProtKB"/>
</dbReference>
<dbReference type="GO" id="GO:0140468">
    <property type="term" value="P:HRI-mediated signaling"/>
    <property type="evidence" value="ECO:0000250"/>
    <property type="project" value="UniProtKB"/>
</dbReference>
<dbReference type="GO" id="GO:0007005">
    <property type="term" value="P:mitochondrion organization"/>
    <property type="evidence" value="ECO:0007669"/>
    <property type="project" value="Ensembl"/>
</dbReference>
<dbReference type="GO" id="GO:0043066">
    <property type="term" value="P:negative regulation of apoptotic process"/>
    <property type="evidence" value="ECO:0007669"/>
    <property type="project" value="Ensembl"/>
</dbReference>
<dbReference type="GO" id="GO:1903898">
    <property type="term" value="P:negative regulation of PERK-mediated unfolded protein response"/>
    <property type="evidence" value="ECO:0000250"/>
    <property type="project" value="UniProtKB"/>
</dbReference>
<dbReference type="GO" id="GO:0001558">
    <property type="term" value="P:regulation of cell growth"/>
    <property type="evidence" value="ECO:0007669"/>
    <property type="project" value="Ensembl"/>
</dbReference>
<dbReference type="CDD" id="cd19512">
    <property type="entry name" value="RecA-like_ATAD3-like"/>
    <property type="match status" value="1"/>
</dbReference>
<dbReference type="FunFam" id="3.40.50.300:FF:000470">
    <property type="entry name" value="ATPase family, AAA domain containing 3A"/>
    <property type="match status" value="1"/>
</dbReference>
<dbReference type="Gene3D" id="3.40.50.300">
    <property type="entry name" value="P-loop containing nucleotide triphosphate hydrolases"/>
    <property type="match status" value="1"/>
</dbReference>
<dbReference type="InterPro" id="IPR003593">
    <property type="entry name" value="AAA+_ATPase"/>
</dbReference>
<dbReference type="InterPro" id="IPR021911">
    <property type="entry name" value="ATAD3_N"/>
</dbReference>
<dbReference type="InterPro" id="IPR003959">
    <property type="entry name" value="ATPase_AAA_core"/>
</dbReference>
<dbReference type="InterPro" id="IPR027417">
    <property type="entry name" value="P-loop_NTPase"/>
</dbReference>
<dbReference type="PANTHER" id="PTHR23075:SF0">
    <property type="entry name" value="ATPASE FAMILY AAA DOMAIN-CONTAINING PROTEIN 3"/>
    <property type="match status" value="1"/>
</dbReference>
<dbReference type="PANTHER" id="PTHR23075">
    <property type="entry name" value="PUTATIVE ATP-ASE"/>
    <property type="match status" value="1"/>
</dbReference>
<dbReference type="Pfam" id="PF00004">
    <property type="entry name" value="AAA"/>
    <property type="match status" value="1"/>
</dbReference>
<dbReference type="Pfam" id="PF12037">
    <property type="entry name" value="ATAD3_N"/>
    <property type="match status" value="1"/>
</dbReference>
<dbReference type="SMART" id="SM00382">
    <property type="entry name" value="AAA"/>
    <property type="match status" value="1"/>
</dbReference>
<dbReference type="SUPFAM" id="SSF52540">
    <property type="entry name" value="P-loop containing nucleoside triphosphate hydrolases"/>
    <property type="match status" value="1"/>
</dbReference>
<proteinExistence type="evidence at protein level"/>
<protein>
    <recommendedName>
        <fullName>ATPase family AAA domain-containing protein 3A</fullName>
        <ecNumber evidence="2">3.6.1.-</ecNumber>
    </recommendedName>
    <alternativeName>
        <fullName>AAA-ATPase TOB3</fullName>
    </alternativeName>
</protein>
<reference key="1">
    <citation type="submission" date="2001-01" db="EMBL/GenBank/DDBJ databases">
        <title>TOB3 is a novel AAA-ATPase involved in protein secretion.</title>
        <authorList>
            <person name="Parng C."/>
            <person name="Piepenhagen P.A."/>
            <person name="Casanova J."/>
            <person name="Pillai S."/>
        </authorList>
    </citation>
    <scope>NUCLEOTIDE SEQUENCE [MRNA] (ISOFORM 1)</scope>
    <source>
        <strain>BALB/cJ</strain>
    </source>
</reference>
<reference key="2">
    <citation type="journal article" date="2004" name="DNA Res.">
        <title>Prediction of the coding sequences of mouse homologues of KIAA gene: IV. The complete nucleotide sequences of 500 mouse KIAA-homologous cDNAs identified by screening of terminal sequences of cDNA clones randomly sampled from size-fractionated libraries.</title>
        <authorList>
            <person name="Okazaki N."/>
            <person name="Kikuno R."/>
            <person name="Ohara R."/>
            <person name="Inamoto S."/>
            <person name="Koseki H."/>
            <person name="Hiraoka S."/>
            <person name="Saga Y."/>
            <person name="Seino S."/>
            <person name="Nishimura M."/>
            <person name="Kaisho T."/>
            <person name="Hoshino K."/>
            <person name="Kitamura H."/>
            <person name="Nagase T."/>
            <person name="Ohara O."/>
            <person name="Koga H."/>
        </authorList>
    </citation>
    <scope>NUCLEOTIDE SEQUENCE [LARGE SCALE MRNA] (ISOFORM 2)</scope>
    <source>
        <tissue>Embryonic tail</tissue>
    </source>
</reference>
<reference key="3">
    <citation type="journal article" date="2005" name="Science">
        <title>The transcriptional landscape of the mammalian genome.</title>
        <authorList>
            <person name="Carninci P."/>
            <person name="Kasukawa T."/>
            <person name="Katayama S."/>
            <person name="Gough J."/>
            <person name="Frith M.C."/>
            <person name="Maeda N."/>
            <person name="Oyama R."/>
            <person name="Ravasi T."/>
            <person name="Lenhard B."/>
            <person name="Wells C."/>
            <person name="Kodzius R."/>
            <person name="Shimokawa K."/>
            <person name="Bajic V.B."/>
            <person name="Brenner S.E."/>
            <person name="Batalov S."/>
            <person name="Forrest A.R."/>
            <person name="Zavolan M."/>
            <person name="Davis M.J."/>
            <person name="Wilming L.G."/>
            <person name="Aidinis V."/>
            <person name="Allen J.E."/>
            <person name="Ambesi-Impiombato A."/>
            <person name="Apweiler R."/>
            <person name="Aturaliya R.N."/>
            <person name="Bailey T.L."/>
            <person name="Bansal M."/>
            <person name="Baxter L."/>
            <person name="Beisel K.W."/>
            <person name="Bersano T."/>
            <person name="Bono H."/>
            <person name="Chalk A.M."/>
            <person name="Chiu K.P."/>
            <person name="Choudhary V."/>
            <person name="Christoffels A."/>
            <person name="Clutterbuck D.R."/>
            <person name="Crowe M.L."/>
            <person name="Dalla E."/>
            <person name="Dalrymple B.P."/>
            <person name="de Bono B."/>
            <person name="Della Gatta G."/>
            <person name="di Bernardo D."/>
            <person name="Down T."/>
            <person name="Engstrom P."/>
            <person name="Fagiolini M."/>
            <person name="Faulkner G."/>
            <person name="Fletcher C.F."/>
            <person name="Fukushima T."/>
            <person name="Furuno M."/>
            <person name="Futaki S."/>
            <person name="Gariboldi M."/>
            <person name="Georgii-Hemming P."/>
            <person name="Gingeras T.R."/>
            <person name="Gojobori T."/>
            <person name="Green R.E."/>
            <person name="Gustincich S."/>
            <person name="Harbers M."/>
            <person name="Hayashi Y."/>
            <person name="Hensch T.K."/>
            <person name="Hirokawa N."/>
            <person name="Hill D."/>
            <person name="Huminiecki L."/>
            <person name="Iacono M."/>
            <person name="Ikeo K."/>
            <person name="Iwama A."/>
            <person name="Ishikawa T."/>
            <person name="Jakt M."/>
            <person name="Kanapin A."/>
            <person name="Katoh M."/>
            <person name="Kawasawa Y."/>
            <person name="Kelso J."/>
            <person name="Kitamura H."/>
            <person name="Kitano H."/>
            <person name="Kollias G."/>
            <person name="Krishnan S.P."/>
            <person name="Kruger A."/>
            <person name="Kummerfeld S.K."/>
            <person name="Kurochkin I.V."/>
            <person name="Lareau L.F."/>
            <person name="Lazarevic D."/>
            <person name="Lipovich L."/>
            <person name="Liu J."/>
            <person name="Liuni S."/>
            <person name="McWilliam S."/>
            <person name="Madan Babu M."/>
            <person name="Madera M."/>
            <person name="Marchionni L."/>
            <person name="Matsuda H."/>
            <person name="Matsuzawa S."/>
            <person name="Miki H."/>
            <person name="Mignone F."/>
            <person name="Miyake S."/>
            <person name="Morris K."/>
            <person name="Mottagui-Tabar S."/>
            <person name="Mulder N."/>
            <person name="Nakano N."/>
            <person name="Nakauchi H."/>
            <person name="Ng P."/>
            <person name="Nilsson R."/>
            <person name="Nishiguchi S."/>
            <person name="Nishikawa S."/>
            <person name="Nori F."/>
            <person name="Ohara O."/>
            <person name="Okazaki Y."/>
            <person name="Orlando V."/>
            <person name="Pang K.C."/>
            <person name="Pavan W.J."/>
            <person name="Pavesi G."/>
            <person name="Pesole G."/>
            <person name="Petrovsky N."/>
            <person name="Piazza S."/>
            <person name="Reed J."/>
            <person name="Reid J.F."/>
            <person name="Ring B.Z."/>
            <person name="Ringwald M."/>
            <person name="Rost B."/>
            <person name="Ruan Y."/>
            <person name="Salzberg S.L."/>
            <person name="Sandelin A."/>
            <person name="Schneider C."/>
            <person name="Schoenbach C."/>
            <person name="Sekiguchi K."/>
            <person name="Semple C.A."/>
            <person name="Seno S."/>
            <person name="Sessa L."/>
            <person name="Sheng Y."/>
            <person name="Shibata Y."/>
            <person name="Shimada H."/>
            <person name="Shimada K."/>
            <person name="Silva D."/>
            <person name="Sinclair B."/>
            <person name="Sperling S."/>
            <person name="Stupka E."/>
            <person name="Sugiura K."/>
            <person name="Sultana R."/>
            <person name="Takenaka Y."/>
            <person name="Taki K."/>
            <person name="Tammoja K."/>
            <person name="Tan S.L."/>
            <person name="Tang S."/>
            <person name="Taylor M.S."/>
            <person name="Tegner J."/>
            <person name="Teichmann S.A."/>
            <person name="Ueda H.R."/>
            <person name="van Nimwegen E."/>
            <person name="Verardo R."/>
            <person name="Wei C.L."/>
            <person name="Yagi K."/>
            <person name="Yamanishi H."/>
            <person name="Zabarovsky E."/>
            <person name="Zhu S."/>
            <person name="Zimmer A."/>
            <person name="Hide W."/>
            <person name="Bult C."/>
            <person name="Grimmond S.M."/>
            <person name="Teasdale R.D."/>
            <person name="Liu E.T."/>
            <person name="Brusic V."/>
            <person name="Quackenbush J."/>
            <person name="Wahlestedt C."/>
            <person name="Mattick J.S."/>
            <person name="Hume D.A."/>
            <person name="Kai C."/>
            <person name="Sasaki D."/>
            <person name="Tomaru Y."/>
            <person name="Fukuda S."/>
            <person name="Kanamori-Katayama M."/>
            <person name="Suzuki M."/>
            <person name="Aoki J."/>
            <person name="Arakawa T."/>
            <person name="Iida J."/>
            <person name="Imamura K."/>
            <person name="Itoh M."/>
            <person name="Kato T."/>
            <person name="Kawaji H."/>
            <person name="Kawagashira N."/>
            <person name="Kawashima T."/>
            <person name="Kojima M."/>
            <person name="Kondo S."/>
            <person name="Konno H."/>
            <person name="Nakano K."/>
            <person name="Ninomiya N."/>
            <person name="Nishio T."/>
            <person name="Okada M."/>
            <person name="Plessy C."/>
            <person name="Shibata K."/>
            <person name="Shiraki T."/>
            <person name="Suzuki S."/>
            <person name="Tagami M."/>
            <person name="Waki K."/>
            <person name="Watahiki A."/>
            <person name="Okamura-Oho Y."/>
            <person name="Suzuki H."/>
            <person name="Kawai J."/>
            <person name="Hayashizaki Y."/>
        </authorList>
    </citation>
    <scope>NUCLEOTIDE SEQUENCE [LARGE SCALE MRNA] (ISOFORM 1)</scope>
    <source>
        <strain>C57BL/6J</strain>
        <strain>NOD</strain>
        <tissue>Bone marrow</tissue>
        <tissue>Embryonic tail</tissue>
        <tissue>Lung</tissue>
        <tissue>Spleen</tissue>
        <tissue>Sympathetic ganglion</tissue>
    </source>
</reference>
<reference key="4">
    <citation type="journal article" date="2009" name="PLoS Biol.">
        <title>Lineage-specific biology revealed by a finished genome assembly of the mouse.</title>
        <authorList>
            <person name="Church D.M."/>
            <person name="Goodstadt L."/>
            <person name="Hillier L.W."/>
            <person name="Zody M.C."/>
            <person name="Goldstein S."/>
            <person name="She X."/>
            <person name="Bult C.J."/>
            <person name="Agarwala R."/>
            <person name="Cherry J.L."/>
            <person name="DiCuccio M."/>
            <person name="Hlavina W."/>
            <person name="Kapustin Y."/>
            <person name="Meric P."/>
            <person name="Maglott D."/>
            <person name="Birtle Z."/>
            <person name="Marques A.C."/>
            <person name="Graves T."/>
            <person name="Zhou S."/>
            <person name="Teague B."/>
            <person name="Potamousis K."/>
            <person name="Churas C."/>
            <person name="Place M."/>
            <person name="Herschleb J."/>
            <person name="Runnheim R."/>
            <person name="Forrest D."/>
            <person name="Amos-Landgraf J."/>
            <person name="Schwartz D.C."/>
            <person name="Cheng Z."/>
            <person name="Lindblad-Toh K."/>
            <person name="Eichler E.E."/>
            <person name="Ponting C.P."/>
        </authorList>
    </citation>
    <scope>NUCLEOTIDE SEQUENCE [LARGE SCALE GENOMIC DNA]</scope>
    <source>
        <strain>C57BL/6J</strain>
    </source>
</reference>
<reference key="5">
    <citation type="submission" date="2005-07" db="EMBL/GenBank/DDBJ databases">
        <authorList>
            <person name="Mural R.J."/>
            <person name="Adams M.D."/>
            <person name="Myers E.W."/>
            <person name="Smith H.O."/>
            <person name="Venter J.C."/>
        </authorList>
    </citation>
    <scope>NUCLEOTIDE SEQUENCE [LARGE SCALE GENOMIC DNA]</scope>
</reference>
<reference key="6">
    <citation type="journal article" date="2004" name="Genome Res.">
        <title>The status, quality, and expansion of the NIH full-length cDNA project: the Mammalian Gene Collection (MGC).</title>
        <authorList>
            <consortium name="The MGC Project Team"/>
        </authorList>
    </citation>
    <scope>NUCLEOTIDE SEQUENCE [LARGE SCALE MRNA] (ISOFORM 1)</scope>
    <source>
        <strain>C57BL/6J</strain>
        <strain>FVB/N</strain>
        <tissue>Brain</tissue>
        <tissue>Colon</tissue>
        <tissue>Mammary tumor</tissue>
    </source>
</reference>
<reference key="7">
    <citation type="submission" date="2007-04" db="UniProtKB">
        <authorList>
            <person name="Lubec G."/>
            <person name="Kang S.U."/>
        </authorList>
    </citation>
    <scope>PROTEIN SEQUENCE OF 302-311 AND 478-485</scope>
    <scope>IDENTIFICATION BY MASS SPECTROMETRY</scope>
    <source>
        <strain>C57BL/6J</strain>
        <tissue>Brain</tissue>
    </source>
</reference>
<reference key="8">
    <citation type="journal article" date="2003" name="J. Biol. Chem.">
        <title>Proteomic analysis of the mouse liver mitochondrial inner membrane.</title>
        <authorList>
            <person name="Da Cruz S."/>
            <person name="Xenarios I."/>
            <person name="Langridge J."/>
            <person name="Vilbois F."/>
            <person name="Parone P.A."/>
            <person name="Martinou J.-C."/>
        </authorList>
    </citation>
    <scope>SUBCELLULAR LOCATION</scope>
</reference>
<reference key="9">
    <citation type="journal article" date="2010" name="Cell">
        <title>A tissue-specific atlas of mouse protein phosphorylation and expression.</title>
        <authorList>
            <person name="Huttlin E.L."/>
            <person name="Jedrychowski M.P."/>
            <person name="Elias J.E."/>
            <person name="Goswami T."/>
            <person name="Rad R."/>
            <person name="Beausoleil S.A."/>
            <person name="Villen J."/>
            <person name="Haas W."/>
            <person name="Sowa M.E."/>
            <person name="Gygi S.P."/>
        </authorList>
    </citation>
    <scope>IDENTIFICATION BY MASS SPECTROMETRY [LARGE SCALE ANALYSIS]</scope>
    <source>
        <tissue>Brain</tissue>
        <tissue>Brown adipose tissue</tissue>
        <tissue>Heart</tissue>
        <tissue>Kidney</tissue>
        <tissue>Liver</tissue>
        <tissue>Pancreas</tissue>
        <tissue>Spleen</tissue>
        <tissue>Testis</tissue>
    </source>
</reference>
<reference key="10">
    <citation type="journal article" date="2010" name="J. Cell Sci.">
        <title>ATPase family AAA domain-containing 3A is a novel anti-apoptotic factor in lung adenocarcinoma cells.</title>
        <authorList>
            <person name="Fang H.Y."/>
            <person name="Chang C.L."/>
            <person name="Hsu S.H."/>
            <person name="Huang C.Y."/>
            <person name="Chiang S.F."/>
            <person name="Chiou S.H."/>
            <person name="Huang C.H."/>
            <person name="Hsiao Y.T."/>
            <person name="Lin T.Y."/>
            <person name="Chiang I.P."/>
            <person name="Hsu W.H."/>
            <person name="Sugano S."/>
            <person name="Chen C.Y."/>
            <person name="Lin C.Y."/>
            <person name="Ko W.J."/>
            <person name="Chow K.C."/>
        </authorList>
    </citation>
    <scope>TISSUE SPECIFICITY</scope>
</reference>
<reference key="11">
    <citation type="journal article" date="2013" name="Mol. Cell">
        <title>SIRT5-mediated lysine desuccinylation impacts diverse metabolic pathways.</title>
        <authorList>
            <person name="Park J."/>
            <person name="Chen Y."/>
            <person name="Tishkoff D.X."/>
            <person name="Peng C."/>
            <person name="Tan M."/>
            <person name="Dai L."/>
            <person name="Xie Z."/>
            <person name="Zhang Y."/>
            <person name="Zwaans B.M."/>
            <person name="Skinner M.E."/>
            <person name="Lombard D.B."/>
            <person name="Zhao Y."/>
        </authorList>
    </citation>
    <scope>SUCCINYLATION [LARGE SCALE ANALYSIS] AT LYS-490</scope>
    <scope>IDENTIFICATION BY MASS SPECTROMETRY [LARGE SCALE ANALYSIS]</scope>
    <source>
        <tissue>Liver</tissue>
    </source>
</reference>
<reference key="12">
    <citation type="journal article" date="2013" name="Proc. Natl. Acad. Sci. U.S.A.">
        <title>Label-free quantitative proteomics of the lysine acetylome in mitochondria identifies substrates of SIRT3 in metabolic pathways.</title>
        <authorList>
            <person name="Rardin M.J."/>
            <person name="Newman J.C."/>
            <person name="Held J.M."/>
            <person name="Cusack M.P."/>
            <person name="Sorensen D.J."/>
            <person name="Li B."/>
            <person name="Schilling B."/>
            <person name="Mooney S.D."/>
            <person name="Kahn C.R."/>
            <person name="Verdin E."/>
            <person name="Gibson B.W."/>
        </authorList>
    </citation>
    <scope>ACETYLATION [LARGE SCALE ANALYSIS] AT LYS-490; LYS-494 AND LYS-512</scope>
    <scope>IDENTIFICATION BY MASS SPECTROMETRY [LARGE SCALE ANALYSIS]</scope>
    <source>
        <tissue>Liver</tissue>
    </source>
</reference>
<accession>Q925I1</accession>
<accession>A2AD89</accession>
<accession>Q3TA78</accession>
<accession>Q3UE74</accession>
<accession>Q69ZM7</accession>
<accession>Q8C6C6</accession>
<organism>
    <name type="scientific">Mus musculus</name>
    <name type="common">Mouse</name>
    <dbReference type="NCBI Taxonomy" id="10090"/>
    <lineage>
        <taxon>Eukaryota</taxon>
        <taxon>Metazoa</taxon>
        <taxon>Chordata</taxon>
        <taxon>Craniata</taxon>
        <taxon>Vertebrata</taxon>
        <taxon>Euteleostomi</taxon>
        <taxon>Mammalia</taxon>
        <taxon>Eutheria</taxon>
        <taxon>Euarchontoglires</taxon>
        <taxon>Glires</taxon>
        <taxon>Rodentia</taxon>
        <taxon>Myomorpha</taxon>
        <taxon>Muroidea</taxon>
        <taxon>Muridae</taxon>
        <taxon>Murinae</taxon>
        <taxon>Mus</taxon>
        <taxon>Mus</taxon>
    </lineage>
</organism>
<sequence>MSWLFGIKGPKGEGTGPPLPLPPAQPGAEGGGDRGAGDRPSPKDKWSNFDPTGLERAAKAARELEHSRHAKEALSLAQMQEQTLQLEQQSKLKEYEAAVEQLKSEQIRVQAEERRKTLTEETRQHQARAQYQDKLARQRYEDQLKQQQLLNEENLRKQEESVQKQEAIRRATVEREMELRHKNEMLRVEAEARARAKADRENADIIREQIRLKAAEHRQTILESIRTAGTLLGEGFRAFVTDWDKVTATVAGLTLLAVGVYSAKNATSVAGRYIEARLGKPSLVRETSRISVLEALRHPIQVSRRLVSRPQDALEGVILSPSLEARVRDIAIATRNTKKNKSLYRNVLMYGPPGTGKTLFAKKLALHSGMDYAIMTGGDVAPMGREGVTAMHKVFDWASTSRRGLLLFVDEADAFLRKRATEKISEDLRATLNAFLHRTGQHSSKFMLVLASNQPEQFDWAINDRIDEMVCFALPQREERERLVRMYFDKYVLKPATEGKQRLKVAQFDYGKKCSEVAQLTEGMSGREIAQLAVAWQAMAYSSEDGVLTEAMMDARVQDAVQQHQQKMQWLKVERPDSQTNKPPHPSLLSC</sequence>
<keyword id="KW-0007">Acetylation</keyword>
<keyword id="KW-0025">Alternative splicing</keyword>
<keyword id="KW-0067">ATP-binding</keyword>
<keyword id="KW-0175">Coiled coil</keyword>
<keyword id="KW-0903">Direct protein sequencing</keyword>
<keyword id="KW-0378">Hydrolase</keyword>
<keyword id="KW-0472">Membrane</keyword>
<keyword id="KW-0496">Mitochondrion</keyword>
<keyword id="KW-0999">Mitochondrion inner membrane</keyword>
<keyword id="KW-1135">Mitochondrion nucleoid</keyword>
<keyword id="KW-0547">Nucleotide-binding</keyword>
<keyword id="KW-1185">Reference proteome</keyword>
<keyword id="KW-0812">Transmembrane</keyword>
<keyword id="KW-1133">Transmembrane helix</keyword>
<gene>
    <name type="primary">Atad3a</name>
    <name type="synonym">Atad3</name>
    <name type="synonym">Kiaa1273</name>
</gene>